<reference key="1">
    <citation type="submission" date="2008-07" db="EMBL/GenBank/DDBJ databases">
        <title>Complete sequence of Geobacter bemidjiensis BEM.</title>
        <authorList>
            <consortium name="US DOE Joint Genome Institute"/>
            <person name="Lucas S."/>
            <person name="Copeland A."/>
            <person name="Lapidus A."/>
            <person name="Glavina del Rio T."/>
            <person name="Dalin E."/>
            <person name="Tice H."/>
            <person name="Bruce D."/>
            <person name="Goodwin L."/>
            <person name="Pitluck S."/>
            <person name="Kiss H."/>
            <person name="Brettin T."/>
            <person name="Detter J.C."/>
            <person name="Han C."/>
            <person name="Kuske C.R."/>
            <person name="Schmutz J."/>
            <person name="Larimer F."/>
            <person name="Land M."/>
            <person name="Hauser L."/>
            <person name="Kyrpides N."/>
            <person name="Lykidis A."/>
            <person name="Lovley D."/>
            <person name="Richardson P."/>
        </authorList>
    </citation>
    <scope>NUCLEOTIDE SEQUENCE [LARGE SCALE GENOMIC DNA]</scope>
    <source>
        <strain>ATCC BAA-1014 / DSM 16622 / JCM 12645 / Bem</strain>
    </source>
</reference>
<accession>B5EB50</accession>
<proteinExistence type="inferred from homology"/>
<comment type="function">
    <text evidence="1">Catalyzes the reversible cyclization of carbamoyl aspartate to dihydroorotate.</text>
</comment>
<comment type="catalytic activity">
    <reaction evidence="1">
        <text>(S)-dihydroorotate + H2O = N-carbamoyl-L-aspartate + H(+)</text>
        <dbReference type="Rhea" id="RHEA:24296"/>
        <dbReference type="ChEBI" id="CHEBI:15377"/>
        <dbReference type="ChEBI" id="CHEBI:15378"/>
        <dbReference type="ChEBI" id="CHEBI:30864"/>
        <dbReference type="ChEBI" id="CHEBI:32814"/>
        <dbReference type="EC" id="3.5.2.3"/>
    </reaction>
</comment>
<comment type="cofactor">
    <cofactor evidence="1">
        <name>Zn(2+)</name>
        <dbReference type="ChEBI" id="CHEBI:29105"/>
    </cofactor>
    <text evidence="1">Binds 2 Zn(2+) ions per subunit.</text>
</comment>
<comment type="pathway">
    <text evidence="1">Pyrimidine metabolism; UMP biosynthesis via de novo pathway; (S)-dihydroorotate from bicarbonate: step 3/3.</text>
</comment>
<comment type="similarity">
    <text evidence="1">Belongs to the metallo-dependent hydrolases superfamily. DHOase family. Class I DHOase subfamily.</text>
</comment>
<name>PYRC_CITBB</name>
<evidence type="ECO:0000255" key="1">
    <source>
        <dbReference type="HAMAP-Rule" id="MF_00220"/>
    </source>
</evidence>
<keyword id="KW-0378">Hydrolase</keyword>
<keyword id="KW-0479">Metal-binding</keyword>
<keyword id="KW-0665">Pyrimidine biosynthesis</keyword>
<keyword id="KW-1185">Reference proteome</keyword>
<keyword id="KW-0862">Zinc</keyword>
<protein>
    <recommendedName>
        <fullName evidence="1">Dihydroorotase</fullName>
        <shortName evidence="1">DHOase</shortName>
        <ecNumber evidence="1">3.5.2.3</ecNumber>
    </recommendedName>
</protein>
<gene>
    <name evidence="1" type="primary">pyrC</name>
    <name type="ordered locus">Gbem_1897</name>
</gene>
<feature type="chain" id="PRO_1000100075" description="Dihydroorotase">
    <location>
        <begin position="1"/>
        <end position="424"/>
    </location>
</feature>
<feature type="active site" evidence="1">
    <location>
        <position position="306"/>
    </location>
</feature>
<feature type="binding site" evidence="1">
    <location>
        <position position="61"/>
    </location>
    <ligand>
        <name>Zn(2+)</name>
        <dbReference type="ChEBI" id="CHEBI:29105"/>
        <label>1</label>
    </ligand>
</feature>
<feature type="binding site" evidence="1">
    <location>
        <begin position="63"/>
        <end position="65"/>
    </location>
    <ligand>
        <name>substrate</name>
    </ligand>
</feature>
<feature type="binding site" evidence="1">
    <location>
        <position position="63"/>
    </location>
    <ligand>
        <name>Zn(2+)</name>
        <dbReference type="ChEBI" id="CHEBI:29105"/>
        <label>1</label>
    </ligand>
</feature>
<feature type="binding site" evidence="1">
    <location>
        <position position="95"/>
    </location>
    <ligand>
        <name>substrate</name>
    </ligand>
</feature>
<feature type="binding site" evidence="1">
    <location>
        <position position="153"/>
    </location>
    <ligand>
        <name>Zn(2+)</name>
        <dbReference type="ChEBI" id="CHEBI:29105"/>
        <label>1</label>
    </ligand>
</feature>
<feature type="binding site" evidence="1">
    <location>
        <position position="153"/>
    </location>
    <ligand>
        <name>Zn(2+)</name>
        <dbReference type="ChEBI" id="CHEBI:29105"/>
        <label>2</label>
    </ligand>
</feature>
<feature type="binding site" evidence="1">
    <location>
        <position position="180"/>
    </location>
    <ligand>
        <name>Zn(2+)</name>
        <dbReference type="ChEBI" id="CHEBI:29105"/>
        <label>2</label>
    </ligand>
</feature>
<feature type="binding site" evidence="1">
    <location>
        <position position="233"/>
    </location>
    <ligand>
        <name>Zn(2+)</name>
        <dbReference type="ChEBI" id="CHEBI:29105"/>
        <label>2</label>
    </ligand>
</feature>
<feature type="binding site" evidence="1">
    <location>
        <position position="279"/>
    </location>
    <ligand>
        <name>substrate</name>
    </ligand>
</feature>
<feature type="binding site" evidence="1">
    <location>
        <position position="306"/>
    </location>
    <ligand>
        <name>Zn(2+)</name>
        <dbReference type="ChEBI" id="CHEBI:29105"/>
        <label>1</label>
    </ligand>
</feature>
<feature type="binding site" evidence="1">
    <location>
        <position position="310"/>
    </location>
    <ligand>
        <name>substrate</name>
    </ligand>
</feature>
<dbReference type="EC" id="3.5.2.3" evidence="1"/>
<dbReference type="EMBL" id="CP001124">
    <property type="protein sequence ID" value="ACH38911.1"/>
    <property type="molecule type" value="Genomic_DNA"/>
</dbReference>
<dbReference type="RefSeq" id="WP_012530329.1">
    <property type="nucleotide sequence ID" value="NC_011146.1"/>
</dbReference>
<dbReference type="SMR" id="B5EB50"/>
<dbReference type="STRING" id="404380.Gbem_1897"/>
<dbReference type="KEGG" id="gbm:Gbem_1897"/>
<dbReference type="eggNOG" id="COG0044">
    <property type="taxonomic scope" value="Bacteria"/>
</dbReference>
<dbReference type="HOGENOM" id="CLU_015572_1_0_7"/>
<dbReference type="OrthoDB" id="9803027at2"/>
<dbReference type="UniPathway" id="UPA00070">
    <property type="reaction ID" value="UER00117"/>
</dbReference>
<dbReference type="Proteomes" id="UP000008825">
    <property type="component" value="Chromosome"/>
</dbReference>
<dbReference type="GO" id="GO:0005737">
    <property type="term" value="C:cytoplasm"/>
    <property type="evidence" value="ECO:0007669"/>
    <property type="project" value="TreeGrafter"/>
</dbReference>
<dbReference type="GO" id="GO:0004038">
    <property type="term" value="F:allantoinase activity"/>
    <property type="evidence" value="ECO:0007669"/>
    <property type="project" value="TreeGrafter"/>
</dbReference>
<dbReference type="GO" id="GO:0004151">
    <property type="term" value="F:dihydroorotase activity"/>
    <property type="evidence" value="ECO:0007669"/>
    <property type="project" value="UniProtKB-UniRule"/>
</dbReference>
<dbReference type="GO" id="GO:0008270">
    <property type="term" value="F:zinc ion binding"/>
    <property type="evidence" value="ECO:0007669"/>
    <property type="project" value="UniProtKB-UniRule"/>
</dbReference>
<dbReference type="GO" id="GO:0044205">
    <property type="term" value="P:'de novo' UMP biosynthetic process"/>
    <property type="evidence" value="ECO:0007669"/>
    <property type="project" value="UniProtKB-UniRule"/>
</dbReference>
<dbReference type="GO" id="GO:0006145">
    <property type="term" value="P:purine nucleobase catabolic process"/>
    <property type="evidence" value="ECO:0007669"/>
    <property type="project" value="TreeGrafter"/>
</dbReference>
<dbReference type="CDD" id="cd01317">
    <property type="entry name" value="DHOase_IIa"/>
    <property type="match status" value="1"/>
</dbReference>
<dbReference type="Gene3D" id="3.20.20.140">
    <property type="entry name" value="Metal-dependent hydrolases"/>
    <property type="match status" value="1"/>
</dbReference>
<dbReference type="Gene3D" id="2.30.40.10">
    <property type="entry name" value="Urease, subunit C, domain 1"/>
    <property type="match status" value="1"/>
</dbReference>
<dbReference type="HAMAP" id="MF_00220_B">
    <property type="entry name" value="PyrC_classI_B"/>
    <property type="match status" value="1"/>
</dbReference>
<dbReference type="InterPro" id="IPR006680">
    <property type="entry name" value="Amidohydro-rel"/>
</dbReference>
<dbReference type="InterPro" id="IPR004722">
    <property type="entry name" value="DHOase"/>
</dbReference>
<dbReference type="InterPro" id="IPR050138">
    <property type="entry name" value="DHOase/Allantoinase_Hydrolase"/>
</dbReference>
<dbReference type="InterPro" id="IPR002195">
    <property type="entry name" value="Dihydroorotase_CS"/>
</dbReference>
<dbReference type="InterPro" id="IPR011059">
    <property type="entry name" value="Metal-dep_hydrolase_composite"/>
</dbReference>
<dbReference type="InterPro" id="IPR032466">
    <property type="entry name" value="Metal_Hydrolase"/>
</dbReference>
<dbReference type="NCBIfam" id="TIGR00857">
    <property type="entry name" value="pyrC_multi"/>
    <property type="match status" value="1"/>
</dbReference>
<dbReference type="PANTHER" id="PTHR43668">
    <property type="entry name" value="ALLANTOINASE"/>
    <property type="match status" value="1"/>
</dbReference>
<dbReference type="PANTHER" id="PTHR43668:SF2">
    <property type="entry name" value="ALLANTOINASE"/>
    <property type="match status" value="1"/>
</dbReference>
<dbReference type="Pfam" id="PF01979">
    <property type="entry name" value="Amidohydro_1"/>
    <property type="match status" value="1"/>
</dbReference>
<dbReference type="SUPFAM" id="SSF51338">
    <property type="entry name" value="Composite domain of metallo-dependent hydrolases"/>
    <property type="match status" value="1"/>
</dbReference>
<dbReference type="SUPFAM" id="SSF51556">
    <property type="entry name" value="Metallo-dependent hydrolases"/>
    <property type="match status" value="1"/>
</dbReference>
<dbReference type="PROSITE" id="PS00482">
    <property type="entry name" value="DIHYDROOROTASE_1"/>
    <property type="match status" value="1"/>
</dbReference>
<dbReference type="PROSITE" id="PS00483">
    <property type="entry name" value="DIHYDROOROTASE_2"/>
    <property type="match status" value="1"/>
</dbReference>
<organism>
    <name type="scientific">Citrifermentans bemidjiense (strain ATCC BAA-1014 / DSM 16622 / JCM 12645 / Bem)</name>
    <name type="common">Geobacter bemidjiensis</name>
    <dbReference type="NCBI Taxonomy" id="404380"/>
    <lineage>
        <taxon>Bacteria</taxon>
        <taxon>Pseudomonadati</taxon>
        <taxon>Thermodesulfobacteriota</taxon>
        <taxon>Desulfuromonadia</taxon>
        <taxon>Geobacterales</taxon>
        <taxon>Geobacteraceae</taxon>
        <taxon>Citrifermentans</taxon>
    </lineage>
</organism>
<sequence>MNLLIKGGRVIDPSQGIDANLDVLIADGVVLELGQGLAAPEGTPAIDASGLIVTPGLIDMHVHLRDPGLEYKEDIATGSRSAAAGGFTSVACMPNTSPVIDSKAIASYIINKAKSEALVNVFPIGCITKGGKGESLAEMGELKEAGCVAVSDDGKPVCNSELMRRALEYAKGIGIAVISHSEDLALVGEGVMNEGFVSTELGLKGIPWAAEDIAVAREVYLAEFAGAPVHIAHISTVGSARIIRNAKARGVKVTCETAPHYFTLTDEAVRGYETNAKMNPPLRSAADVEAMKAGLADGTIDAIATDHAPHHPDEKDVEFNVALNGIVGLETSLSLSLKLVEEGRLDLNQLVSLMSCTPAKILGLDRGTLKVGAVGDVTIIDPAKEWQVEAAKLESKSKNSPFLGWKMKGRAVYTVVKGQVVYQA</sequence>